<sequence length="545" mass="60962">MTHFIFVTGGVVSSLGKGISAASVAALLEARGLKVTMVKMDPYINVDPGTMSPFQHGEVFVTEDGAETDLDLGYYERFLRRAKMTKLNNFTSGRVYQDVLNKERRGDYLGGTVQVIPHITDNIKERVLAAGEGYDVAIVEIGGTVGDIESLPFMESVRQLMVELGHKRTMLMHLTLLPYIRSAAELKTKPTQHSVKELLSIGIQPDILICRTEHDVDADTKRKIALFTNVEARAVVVCKDAKTIYQIPRNFYEQKVDDLICERFGYNDLPQADLSDWDQVCEALFNPEYIVRVAMVGKYVELPDAYKSVNEALLHAGIQNRVKVQIDYVDAETLETQDISILSTADAILVPGGFGERGTEGKMLAIKYAREQGIPFLGICLGMQLAVIEYARNVAGLAEATSTEFNRSTKFPIIGLITEWLDERGELQQRSVESDLGGTMRLGAQKSELVEGTKTRQVYGKAEIVERHRHRYEMNDRFIEPIEKAGMKISGYSTAQHLVETVEIPEHPWFIAVQFHPEFTSSPRDGHPLFASFIDAAKKQHLKTK</sequence>
<gene>
    <name evidence="1" type="primary">pyrG</name>
    <name type="ordered locus">ACIAD2003</name>
</gene>
<feature type="chain" id="PRO_0000266049" description="CTP synthase">
    <location>
        <begin position="1"/>
        <end position="545"/>
    </location>
</feature>
<feature type="domain" description="Glutamine amidotransferase type-1" evidence="1">
    <location>
        <begin position="292"/>
        <end position="543"/>
    </location>
</feature>
<feature type="region of interest" description="Amidoligase domain" evidence="1">
    <location>
        <begin position="1"/>
        <end position="266"/>
    </location>
</feature>
<feature type="active site" description="Nucleophile; for glutamine hydrolysis" evidence="1">
    <location>
        <position position="380"/>
    </location>
</feature>
<feature type="active site" evidence="1">
    <location>
        <position position="516"/>
    </location>
</feature>
<feature type="active site" evidence="1">
    <location>
        <position position="518"/>
    </location>
</feature>
<feature type="binding site" evidence="1">
    <location>
        <position position="13"/>
    </location>
    <ligand>
        <name>CTP</name>
        <dbReference type="ChEBI" id="CHEBI:37563"/>
        <note>allosteric inhibitor</note>
    </ligand>
</feature>
<feature type="binding site" evidence="1">
    <location>
        <position position="13"/>
    </location>
    <ligand>
        <name>UTP</name>
        <dbReference type="ChEBI" id="CHEBI:46398"/>
    </ligand>
</feature>
<feature type="binding site" evidence="1">
    <location>
        <begin position="14"/>
        <end position="19"/>
    </location>
    <ligand>
        <name>ATP</name>
        <dbReference type="ChEBI" id="CHEBI:30616"/>
    </ligand>
</feature>
<feature type="binding site" evidence="1">
    <location>
        <position position="71"/>
    </location>
    <ligand>
        <name>ATP</name>
        <dbReference type="ChEBI" id="CHEBI:30616"/>
    </ligand>
</feature>
<feature type="binding site" evidence="1">
    <location>
        <position position="71"/>
    </location>
    <ligand>
        <name>Mg(2+)</name>
        <dbReference type="ChEBI" id="CHEBI:18420"/>
    </ligand>
</feature>
<feature type="binding site" evidence="1">
    <location>
        <position position="140"/>
    </location>
    <ligand>
        <name>Mg(2+)</name>
        <dbReference type="ChEBI" id="CHEBI:18420"/>
    </ligand>
</feature>
<feature type="binding site" evidence="1">
    <location>
        <begin position="147"/>
        <end position="149"/>
    </location>
    <ligand>
        <name>CTP</name>
        <dbReference type="ChEBI" id="CHEBI:37563"/>
        <note>allosteric inhibitor</note>
    </ligand>
</feature>
<feature type="binding site" evidence="1">
    <location>
        <begin position="187"/>
        <end position="192"/>
    </location>
    <ligand>
        <name>CTP</name>
        <dbReference type="ChEBI" id="CHEBI:37563"/>
        <note>allosteric inhibitor</note>
    </ligand>
</feature>
<feature type="binding site" evidence="1">
    <location>
        <begin position="187"/>
        <end position="192"/>
    </location>
    <ligand>
        <name>UTP</name>
        <dbReference type="ChEBI" id="CHEBI:46398"/>
    </ligand>
</feature>
<feature type="binding site" evidence="1">
    <location>
        <position position="223"/>
    </location>
    <ligand>
        <name>CTP</name>
        <dbReference type="ChEBI" id="CHEBI:37563"/>
        <note>allosteric inhibitor</note>
    </ligand>
</feature>
<feature type="binding site" evidence="1">
    <location>
        <position position="223"/>
    </location>
    <ligand>
        <name>UTP</name>
        <dbReference type="ChEBI" id="CHEBI:46398"/>
    </ligand>
</feature>
<feature type="binding site" evidence="1">
    <location>
        <begin position="239"/>
        <end position="241"/>
    </location>
    <ligand>
        <name>ATP</name>
        <dbReference type="ChEBI" id="CHEBI:30616"/>
    </ligand>
</feature>
<feature type="binding site" evidence="1">
    <location>
        <position position="353"/>
    </location>
    <ligand>
        <name>L-glutamine</name>
        <dbReference type="ChEBI" id="CHEBI:58359"/>
    </ligand>
</feature>
<feature type="binding site" evidence="1">
    <location>
        <begin position="381"/>
        <end position="384"/>
    </location>
    <ligand>
        <name>L-glutamine</name>
        <dbReference type="ChEBI" id="CHEBI:58359"/>
    </ligand>
</feature>
<feature type="binding site" evidence="1">
    <location>
        <position position="404"/>
    </location>
    <ligand>
        <name>L-glutamine</name>
        <dbReference type="ChEBI" id="CHEBI:58359"/>
    </ligand>
</feature>
<feature type="binding site" evidence="1">
    <location>
        <position position="471"/>
    </location>
    <ligand>
        <name>L-glutamine</name>
        <dbReference type="ChEBI" id="CHEBI:58359"/>
    </ligand>
</feature>
<keyword id="KW-0067">ATP-binding</keyword>
<keyword id="KW-0315">Glutamine amidotransferase</keyword>
<keyword id="KW-0436">Ligase</keyword>
<keyword id="KW-0460">Magnesium</keyword>
<keyword id="KW-0479">Metal-binding</keyword>
<keyword id="KW-0547">Nucleotide-binding</keyword>
<keyword id="KW-0665">Pyrimidine biosynthesis</keyword>
<accession>Q6FAT7</accession>
<evidence type="ECO:0000255" key="1">
    <source>
        <dbReference type="HAMAP-Rule" id="MF_01227"/>
    </source>
</evidence>
<name>PYRG_ACIAD</name>
<proteinExistence type="inferred from homology"/>
<dbReference type="EC" id="6.3.4.2" evidence="1"/>
<dbReference type="EMBL" id="CR543861">
    <property type="protein sequence ID" value="CAG68826.1"/>
    <property type="molecule type" value="Genomic_DNA"/>
</dbReference>
<dbReference type="RefSeq" id="WP_004927357.1">
    <property type="nucleotide sequence ID" value="NC_005966.1"/>
</dbReference>
<dbReference type="SMR" id="Q6FAT7"/>
<dbReference type="STRING" id="202950.GCA_001485005_00368"/>
<dbReference type="MEROPS" id="C26.964"/>
<dbReference type="KEGG" id="aci:ACIAD2003"/>
<dbReference type="eggNOG" id="COG0504">
    <property type="taxonomic scope" value="Bacteria"/>
</dbReference>
<dbReference type="HOGENOM" id="CLU_011675_5_0_6"/>
<dbReference type="OrthoDB" id="9801107at2"/>
<dbReference type="BioCyc" id="ASP62977:ACIAD_RS09220-MONOMER"/>
<dbReference type="UniPathway" id="UPA00159">
    <property type="reaction ID" value="UER00277"/>
</dbReference>
<dbReference type="Proteomes" id="UP000000430">
    <property type="component" value="Chromosome"/>
</dbReference>
<dbReference type="GO" id="GO:0005829">
    <property type="term" value="C:cytosol"/>
    <property type="evidence" value="ECO:0007669"/>
    <property type="project" value="TreeGrafter"/>
</dbReference>
<dbReference type="GO" id="GO:0005524">
    <property type="term" value="F:ATP binding"/>
    <property type="evidence" value="ECO:0007669"/>
    <property type="project" value="UniProtKB-KW"/>
</dbReference>
<dbReference type="GO" id="GO:0003883">
    <property type="term" value="F:CTP synthase activity"/>
    <property type="evidence" value="ECO:0007669"/>
    <property type="project" value="UniProtKB-UniRule"/>
</dbReference>
<dbReference type="GO" id="GO:0004359">
    <property type="term" value="F:glutaminase activity"/>
    <property type="evidence" value="ECO:0007669"/>
    <property type="project" value="RHEA"/>
</dbReference>
<dbReference type="GO" id="GO:0042802">
    <property type="term" value="F:identical protein binding"/>
    <property type="evidence" value="ECO:0007669"/>
    <property type="project" value="TreeGrafter"/>
</dbReference>
<dbReference type="GO" id="GO:0046872">
    <property type="term" value="F:metal ion binding"/>
    <property type="evidence" value="ECO:0007669"/>
    <property type="project" value="UniProtKB-KW"/>
</dbReference>
<dbReference type="GO" id="GO:0044210">
    <property type="term" value="P:'de novo' CTP biosynthetic process"/>
    <property type="evidence" value="ECO:0007669"/>
    <property type="project" value="UniProtKB-UniRule"/>
</dbReference>
<dbReference type="GO" id="GO:0019856">
    <property type="term" value="P:pyrimidine nucleobase biosynthetic process"/>
    <property type="evidence" value="ECO:0007669"/>
    <property type="project" value="TreeGrafter"/>
</dbReference>
<dbReference type="CDD" id="cd03113">
    <property type="entry name" value="CTPS_N"/>
    <property type="match status" value="1"/>
</dbReference>
<dbReference type="CDD" id="cd01746">
    <property type="entry name" value="GATase1_CTP_Synthase"/>
    <property type="match status" value="1"/>
</dbReference>
<dbReference type="FunFam" id="3.40.50.300:FF:000009">
    <property type="entry name" value="CTP synthase"/>
    <property type="match status" value="1"/>
</dbReference>
<dbReference type="FunFam" id="3.40.50.880:FF:000002">
    <property type="entry name" value="CTP synthase"/>
    <property type="match status" value="1"/>
</dbReference>
<dbReference type="Gene3D" id="3.40.50.880">
    <property type="match status" value="1"/>
</dbReference>
<dbReference type="Gene3D" id="3.40.50.300">
    <property type="entry name" value="P-loop containing nucleotide triphosphate hydrolases"/>
    <property type="match status" value="1"/>
</dbReference>
<dbReference type="HAMAP" id="MF_01227">
    <property type="entry name" value="PyrG"/>
    <property type="match status" value="1"/>
</dbReference>
<dbReference type="InterPro" id="IPR029062">
    <property type="entry name" value="Class_I_gatase-like"/>
</dbReference>
<dbReference type="InterPro" id="IPR004468">
    <property type="entry name" value="CTP_synthase"/>
</dbReference>
<dbReference type="InterPro" id="IPR017456">
    <property type="entry name" value="CTP_synthase_N"/>
</dbReference>
<dbReference type="InterPro" id="IPR017926">
    <property type="entry name" value="GATASE"/>
</dbReference>
<dbReference type="InterPro" id="IPR033828">
    <property type="entry name" value="GATase1_CTP_Synthase"/>
</dbReference>
<dbReference type="InterPro" id="IPR027417">
    <property type="entry name" value="P-loop_NTPase"/>
</dbReference>
<dbReference type="NCBIfam" id="NF003792">
    <property type="entry name" value="PRK05380.1"/>
    <property type="match status" value="1"/>
</dbReference>
<dbReference type="NCBIfam" id="TIGR00337">
    <property type="entry name" value="PyrG"/>
    <property type="match status" value="1"/>
</dbReference>
<dbReference type="PANTHER" id="PTHR11550">
    <property type="entry name" value="CTP SYNTHASE"/>
    <property type="match status" value="1"/>
</dbReference>
<dbReference type="PANTHER" id="PTHR11550:SF0">
    <property type="entry name" value="CTP SYNTHASE-RELATED"/>
    <property type="match status" value="1"/>
</dbReference>
<dbReference type="Pfam" id="PF06418">
    <property type="entry name" value="CTP_synth_N"/>
    <property type="match status" value="1"/>
</dbReference>
<dbReference type="Pfam" id="PF00117">
    <property type="entry name" value="GATase"/>
    <property type="match status" value="1"/>
</dbReference>
<dbReference type="SUPFAM" id="SSF52317">
    <property type="entry name" value="Class I glutamine amidotransferase-like"/>
    <property type="match status" value="1"/>
</dbReference>
<dbReference type="SUPFAM" id="SSF52540">
    <property type="entry name" value="P-loop containing nucleoside triphosphate hydrolases"/>
    <property type="match status" value="1"/>
</dbReference>
<dbReference type="PROSITE" id="PS51273">
    <property type="entry name" value="GATASE_TYPE_1"/>
    <property type="match status" value="1"/>
</dbReference>
<protein>
    <recommendedName>
        <fullName evidence="1">CTP synthase</fullName>
        <ecNumber evidence="1">6.3.4.2</ecNumber>
    </recommendedName>
    <alternativeName>
        <fullName evidence="1">Cytidine 5'-triphosphate synthase</fullName>
    </alternativeName>
    <alternativeName>
        <fullName evidence="1">Cytidine triphosphate synthetase</fullName>
        <shortName evidence="1">CTP synthetase</shortName>
        <shortName evidence="1">CTPS</shortName>
    </alternativeName>
    <alternativeName>
        <fullName evidence="1">UTP--ammonia ligase</fullName>
    </alternativeName>
</protein>
<reference key="1">
    <citation type="journal article" date="2004" name="Nucleic Acids Res.">
        <title>Unique features revealed by the genome sequence of Acinetobacter sp. ADP1, a versatile and naturally transformation competent bacterium.</title>
        <authorList>
            <person name="Barbe V."/>
            <person name="Vallenet D."/>
            <person name="Fonknechten N."/>
            <person name="Kreimeyer A."/>
            <person name="Oztas S."/>
            <person name="Labarre L."/>
            <person name="Cruveiller S."/>
            <person name="Robert C."/>
            <person name="Duprat S."/>
            <person name="Wincker P."/>
            <person name="Ornston L.N."/>
            <person name="Weissenbach J."/>
            <person name="Marliere P."/>
            <person name="Cohen G.N."/>
            <person name="Medigue C."/>
        </authorList>
    </citation>
    <scope>NUCLEOTIDE SEQUENCE [LARGE SCALE GENOMIC DNA]</scope>
    <source>
        <strain>ATCC 33305 / BD413 / ADP1</strain>
    </source>
</reference>
<organism>
    <name type="scientific">Acinetobacter baylyi (strain ATCC 33305 / BD413 / ADP1)</name>
    <dbReference type="NCBI Taxonomy" id="62977"/>
    <lineage>
        <taxon>Bacteria</taxon>
        <taxon>Pseudomonadati</taxon>
        <taxon>Pseudomonadota</taxon>
        <taxon>Gammaproteobacteria</taxon>
        <taxon>Moraxellales</taxon>
        <taxon>Moraxellaceae</taxon>
        <taxon>Acinetobacter</taxon>
    </lineage>
</organism>
<comment type="function">
    <text evidence="1">Catalyzes the ATP-dependent amination of UTP to CTP with either L-glutamine or ammonia as the source of nitrogen. Regulates intracellular CTP levels through interactions with the four ribonucleotide triphosphates.</text>
</comment>
<comment type="catalytic activity">
    <reaction evidence="1">
        <text>UTP + L-glutamine + ATP + H2O = CTP + L-glutamate + ADP + phosphate + 2 H(+)</text>
        <dbReference type="Rhea" id="RHEA:26426"/>
        <dbReference type="ChEBI" id="CHEBI:15377"/>
        <dbReference type="ChEBI" id="CHEBI:15378"/>
        <dbReference type="ChEBI" id="CHEBI:29985"/>
        <dbReference type="ChEBI" id="CHEBI:30616"/>
        <dbReference type="ChEBI" id="CHEBI:37563"/>
        <dbReference type="ChEBI" id="CHEBI:43474"/>
        <dbReference type="ChEBI" id="CHEBI:46398"/>
        <dbReference type="ChEBI" id="CHEBI:58359"/>
        <dbReference type="ChEBI" id="CHEBI:456216"/>
        <dbReference type="EC" id="6.3.4.2"/>
    </reaction>
</comment>
<comment type="catalytic activity">
    <reaction evidence="1">
        <text>L-glutamine + H2O = L-glutamate + NH4(+)</text>
        <dbReference type="Rhea" id="RHEA:15889"/>
        <dbReference type="ChEBI" id="CHEBI:15377"/>
        <dbReference type="ChEBI" id="CHEBI:28938"/>
        <dbReference type="ChEBI" id="CHEBI:29985"/>
        <dbReference type="ChEBI" id="CHEBI:58359"/>
    </reaction>
</comment>
<comment type="catalytic activity">
    <reaction evidence="1">
        <text>UTP + NH4(+) + ATP = CTP + ADP + phosphate + 2 H(+)</text>
        <dbReference type="Rhea" id="RHEA:16597"/>
        <dbReference type="ChEBI" id="CHEBI:15378"/>
        <dbReference type="ChEBI" id="CHEBI:28938"/>
        <dbReference type="ChEBI" id="CHEBI:30616"/>
        <dbReference type="ChEBI" id="CHEBI:37563"/>
        <dbReference type="ChEBI" id="CHEBI:43474"/>
        <dbReference type="ChEBI" id="CHEBI:46398"/>
        <dbReference type="ChEBI" id="CHEBI:456216"/>
    </reaction>
</comment>
<comment type="activity regulation">
    <text evidence="1">Allosterically activated by GTP, when glutamine is the substrate; GTP has no effect on the reaction when ammonia is the substrate. The allosteric effector GTP functions by stabilizing the protein conformation that binds the tetrahedral intermediate(s) formed during glutamine hydrolysis. Inhibited by the product CTP, via allosteric rather than competitive inhibition.</text>
</comment>
<comment type="pathway">
    <text evidence="1">Pyrimidine metabolism; CTP biosynthesis via de novo pathway; CTP from UDP: step 2/2.</text>
</comment>
<comment type="subunit">
    <text evidence="1">Homotetramer.</text>
</comment>
<comment type="miscellaneous">
    <text evidence="1">CTPSs have evolved a hybrid strategy for distinguishing between UTP and CTP. The overlapping regions of the product feedback inhibitory and substrate sites recognize a common feature in both compounds, the triphosphate moiety. To differentiate isosteric substrate and product pyrimidine rings, an additional pocket far from the expected kinase/ligase catalytic site, specifically recognizes the cytosine and ribose portions of the product inhibitor.</text>
</comment>
<comment type="similarity">
    <text evidence="1">Belongs to the CTP synthase family.</text>
</comment>